<sequence>MSVLVKEVIEKLRLDIVYGEPELLEKEINIADITRPGLEMTGYFDYYTPERIQLLGMKEWSYLISMPSNSRYEVLKKMFLPETPAVIVARGLVVPEEMLKAARECKIAILTSRAATSRLSGELSSYLDSRLAERTSVHGVLMDIYGMGVLIQGDSGIGKSETGLELVKRGHRLVADDRVDIFAKDEITLWGEPAEILKHLIEIRGVGIIDVMSLYGASAVKDSSQVQLAVYLENYDTHKTFDRLGNNAEELEVSGVAIPRIRIPVKTGRNISVVIEAAAMNYRAKEMGFDATRLFDERLTSLIARNEVQNA</sequence>
<keyword id="KW-0067">ATP-binding</keyword>
<keyword id="KW-0119">Carbohydrate metabolism</keyword>
<keyword id="KW-0418">Kinase</keyword>
<keyword id="KW-0460">Magnesium</keyword>
<keyword id="KW-0479">Metal-binding</keyword>
<keyword id="KW-0511">Multifunctional enzyme</keyword>
<keyword id="KW-0547">Nucleotide-binding</keyword>
<keyword id="KW-1185">Reference proteome</keyword>
<keyword id="KW-0723">Serine/threonine-protein kinase</keyword>
<keyword id="KW-0808">Transferase</keyword>
<protein>
    <recommendedName>
        <fullName evidence="1">HPr kinase/phosphorylase</fullName>
        <shortName evidence="1">HPrK/P</shortName>
        <ecNumber evidence="1">2.7.11.-</ecNumber>
        <ecNumber evidence="1">2.7.4.-</ecNumber>
    </recommendedName>
    <alternativeName>
        <fullName evidence="1">HPr(Ser) kinase/phosphorylase</fullName>
    </alternativeName>
</protein>
<accession>Q04JT7</accession>
<feature type="chain" id="PRO_1000067175" description="HPr kinase/phosphorylase">
    <location>
        <begin position="1"/>
        <end position="311"/>
    </location>
</feature>
<feature type="region of interest" description="Important for the catalytic mechanism of both phosphorylation and dephosphorylation" evidence="1">
    <location>
        <begin position="201"/>
        <end position="210"/>
    </location>
</feature>
<feature type="region of interest" description="Important for the catalytic mechanism of dephosphorylation" evidence="1">
    <location>
        <begin position="264"/>
        <end position="269"/>
    </location>
</feature>
<feature type="active site" evidence="1">
    <location>
        <position position="138"/>
    </location>
</feature>
<feature type="active site" evidence="1">
    <location>
        <position position="159"/>
    </location>
</feature>
<feature type="active site" description="Proton acceptor; for phosphorylation activity. Proton donor; for dephosphorylation activity" evidence="1">
    <location>
        <position position="177"/>
    </location>
</feature>
<feature type="active site" evidence="1">
    <location>
        <position position="243"/>
    </location>
</feature>
<feature type="binding site" evidence="1">
    <location>
        <begin position="153"/>
        <end position="160"/>
    </location>
    <ligand>
        <name>ATP</name>
        <dbReference type="ChEBI" id="CHEBI:30616"/>
    </ligand>
</feature>
<feature type="binding site" evidence="1">
    <location>
        <position position="160"/>
    </location>
    <ligand>
        <name>Mg(2+)</name>
        <dbReference type="ChEBI" id="CHEBI:18420"/>
    </ligand>
</feature>
<feature type="binding site" evidence="1">
    <location>
        <position position="202"/>
    </location>
    <ligand>
        <name>Mg(2+)</name>
        <dbReference type="ChEBI" id="CHEBI:18420"/>
    </ligand>
</feature>
<evidence type="ECO:0000255" key="1">
    <source>
        <dbReference type="HAMAP-Rule" id="MF_01249"/>
    </source>
</evidence>
<name>HPRK_STRP2</name>
<gene>
    <name evidence="1" type="primary">hprK</name>
    <name type="ordered locus">SPD_1244</name>
</gene>
<reference key="1">
    <citation type="journal article" date="2007" name="J. Bacteriol.">
        <title>Genome sequence of Avery's virulent serotype 2 strain D39 of Streptococcus pneumoniae and comparison with that of unencapsulated laboratory strain R6.</title>
        <authorList>
            <person name="Lanie J.A."/>
            <person name="Ng W.-L."/>
            <person name="Kazmierczak K.M."/>
            <person name="Andrzejewski T.M."/>
            <person name="Davidsen T.M."/>
            <person name="Wayne K.J."/>
            <person name="Tettelin H."/>
            <person name="Glass J.I."/>
            <person name="Winkler M.E."/>
        </authorList>
    </citation>
    <scope>NUCLEOTIDE SEQUENCE [LARGE SCALE GENOMIC DNA]</scope>
    <source>
        <strain>D39 / NCTC 7466</strain>
    </source>
</reference>
<organism>
    <name type="scientific">Streptococcus pneumoniae serotype 2 (strain D39 / NCTC 7466)</name>
    <dbReference type="NCBI Taxonomy" id="373153"/>
    <lineage>
        <taxon>Bacteria</taxon>
        <taxon>Bacillati</taxon>
        <taxon>Bacillota</taxon>
        <taxon>Bacilli</taxon>
        <taxon>Lactobacillales</taxon>
        <taxon>Streptococcaceae</taxon>
        <taxon>Streptococcus</taxon>
    </lineage>
</organism>
<dbReference type="EC" id="2.7.11.-" evidence="1"/>
<dbReference type="EC" id="2.7.4.-" evidence="1"/>
<dbReference type="EMBL" id="CP000410">
    <property type="protein sequence ID" value="ABJ53905.1"/>
    <property type="molecule type" value="Genomic_DNA"/>
</dbReference>
<dbReference type="RefSeq" id="WP_000115140.1">
    <property type="nucleotide sequence ID" value="NZ_JAMLJR010000005.1"/>
</dbReference>
<dbReference type="SMR" id="Q04JT7"/>
<dbReference type="PaxDb" id="373153-SPD_1244"/>
<dbReference type="GeneID" id="45653329"/>
<dbReference type="KEGG" id="spd:SPD_1244"/>
<dbReference type="eggNOG" id="COG1493">
    <property type="taxonomic scope" value="Bacteria"/>
</dbReference>
<dbReference type="HOGENOM" id="CLU_052030_0_1_9"/>
<dbReference type="Proteomes" id="UP000001452">
    <property type="component" value="Chromosome"/>
</dbReference>
<dbReference type="GO" id="GO:0005524">
    <property type="term" value="F:ATP binding"/>
    <property type="evidence" value="ECO:0007669"/>
    <property type="project" value="UniProtKB-UniRule"/>
</dbReference>
<dbReference type="GO" id="GO:0000287">
    <property type="term" value="F:magnesium ion binding"/>
    <property type="evidence" value="ECO:0007669"/>
    <property type="project" value="UniProtKB-UniRule"/>
</dbReference>
<dbReference type="GO" id="GO:0000155">
    <property type="term" value="F:phosphorelay sensor kinase activity"/>
    <property type="evidence" value="ECO:0007669"/>
    <property type="project" value="InterPro"/>
</dbReference>
<dbReference type="GO" id="GO:0004674">
    <property type="term" value="F:protein serine/threonine kinase activity"/>
    <property type="evidence" value="ECO:0007669"/>
    <property type="project" value="UniProtKB-KW"/>
</dbReference>
<dbReference type="GO" id="GO:0004712">
    <property type="term" value="F:protein serine/threonine/tyrosine kinase activity"/>
    <property type="evidence" value="ECO:0007669"/>
    <property type="project" value="UniProtKB-UniRule"/>
</dbReference>
<dbReference type="GO" id="GO:0006109">
    <property type="term" value="P:regulation of carbohydrate metabolic process"/>
    <property type="evidence" value="ECO:0007669"/>
    <property type="project" value="UniProtKB-UniRule"/>
</dbReference>
<dbReference type="CDD" id="cd01918">
    <property type="entry name" value="HprK_C"/>
    <property type="match status" value="1"/>
</dbReference>
<dbReference type="FunFam" id="3.40.50.300:FF:000174">
    <property type="entry name" value="HPr kinase/phosphorylase"/>
    <property type="match status" value="1"/>
</dbReference>
<dbReference type="Gene3D" id="3.40.1390.20">
    <property type="entry name" value="HprK N-terminal domain-like"/>
    <property type="match status" value="1"/>
</dbReference>
<dbReference type="Gene3D" id="3.40.50.300">
    <property type="entry name" value="P-loop containing nucleotide triphosphate hydrolases"/>
    <property type="match status" value="1"/>
</dbReference>
<dbReference type="HAMAP" id="MF_01249">
    <property type="entry name" value="HPr_kinase"/>
    <property type="match status" value="1"/>
</dbReference>
<dbReference type="InterPro" id="IPR003755">
    <property type="entry name" value="HPr(Ser)_kin/Pase"/>
</dbReference>
<dbReference type="InterPro" id="IPR011104">
    <property type="entry name" value="Hpr_kin/Pase_C"/>
</dbReference>
<dbReference type="InterPro" id="IPR011126">
    <property type="entry name" value="Hpr_kin/Pase_Hpr_N"/>
</dbReference>
<dbReference type="InterPro" id="IPR027417">
    <property type="entry name" value="P-loop_NTPase"/>
</dbReference>
<dbReference type="InterPro" id="IPR028979">
    <property type="entry name" value="Ser_kin/Pase_Hpr-like_N_sf"/>
</dbReference>
<dbReference type="NCBIfam" id="TIGR00679">
    <property type="entry name" value="hpr-ser"/>
    <property type="match status" value="1"/>
</dbReference>
<dbReference type="PANTHER" id="PTHR30305:SF1">
    <property type="entry name" value="HPR KINASE_PHOSPHORYLASE"/>
    <property type="match status" value="1"/>
</dbReference>
<dbReference type="PANTHER" id="PTHR30305">
    <property type="entry name" value="PROTEIN YJDM-RELATED"/>
    <property type="match status" value="1"/>
</dbReference>
<dbReference type="Pfam" id="PF07475">
    <property type="entry name" value="Hpr_kinase_C"/>
    <property type="match status" value="1"/>
</dbReference>
<dbReference type="Pfam" id="PF02603">
    <property type="entry name" value="Hpr_kinase_N"/>
    <property type="match status" value="1"/>
</dbReference>
<dbReference type="SUPFAM" id="SSF75138">
    <property type="entry name" value="HprK N-terminal domain-like"/>
    <property type="match status" value="1"/>
</dbReference>
<dbReference type="SUPFAM" id="SSF53795">
    <property type="entry name" value="PEP carboxykinase-like"/>
    <property type="match status" value="1"/>
</dbReference>
<proteinExistence type="inferred from homology"/>
<comment type="function">
    <text evidence="1">Catalyzes the ATP- as well as the pyrophosphate-dependent phosphorylation of a specific serine residue in HPr, a phosphocarrier protein of the phosphoenolpyruvate-dependent sugar phosphotransferase system (PTS). HprK/P also catalyzes the pyrophosphate-producing, inorganic phosphate-dependent dephosphorylation (phosphorolysis) of seryl-phosphorylated HPr (P-Ser-HPr). The two antagonistic activities of HprK/P are regulated by several intracellular metabolites, which change their concentration in response to the absence or presence of rapidly metabolisable carbon sources (glucose, fructose, etc.) in the growth medium. Therefore, by controlling the phosphorylation state of HPr, HPrK/P is a sensor enzyme that plays a major role in the regulation of carbon metabolism and sugar transport: it mediates carbon catabolite repression (CCR), and regulates PTS-catalyzed carbohydrate uptake and inducer exclusion.</text>
</comment>
<comment type="catalytic activity">
    <reaction evidence="1">
        <text>[HPr protein]-L-serine + ATP = [HPr protein]-O-phospho-L-serine + ADP + H(+)</text>
        <dbReference type="Rhea" id="RHEA:46600"/>
        <dbReference type="Rhea" id="RHEA-COMP:11602"/>
        <dbReference type="Rhea" id="RHEA-COMP:11603"/>
        <dbReference type="ChEBI" id="CHEBI:15378"/>
        <dbReference type="ChEBI" id="CHEBI:29999"/>
        <dbReference type="ChEBI" id="CHEBI:30616"/>
        <dbReference type="ChEBI" id="CHEBI:83421"/>
        <dbReference type="ChEBI" id="CHEBI:456216"/>
    </reaction>
</comment>
<comment type="catalytic activity">
    <reaction evidence="1">
        <text>[HPr protein]-O-phospho-L-serine + phosphate + H(+) = [HPr protein]-L-serine + diphosphate</text>
        <dbReference type="Rhea" id="RHEA:46604"/>
        <dbReference type="Rhea" id="RHEA-COMP:11602"/>
        <dbReference type="Rhea" id="RHEA-COMP:11603"/>
        <dbReference type="ChEBI" id="CHEBI:15378"/>
        <dbReference type="ChEBI" id="CHEBI:29999"/>
        <dbReference type="ChEBI" id="CHEBI:33019"/>
        <dbReference type="ChEBI" id="CHEBI:43474"/>
        <dbReference type="ChEBI" id="CHEBI:83421"/>
    </reaction>
</comment>
<comment type="cofactor">
    <cofactor evidence="1">
        <name>Mg(2+)</name>
        <dbReference type="ChEBI" id="CHEBI:18420"/>
    </cofactor>
</comment>
<comment type="subunit">
    <text evidence="1">Homohexamer.</text>
</comment>
<comment type="domain">
    <text evidence="1">The Walker A ATP-binding motif also binds Pi and PPi.</text>
</comment>
<comment type="miscellaneous">
    <text evidence="1">Both phosphorylation and phosphorolysis are carried out by the same active site and suggest a common mechanism for both reactions.</text>
</comment>
<comment type="similarity">
    <text evidence="1">Belongs to the HPrK/P family.</text>
</comment>